<accession>Q9M7D1</accession>
<sequence>MALVSSAPKSCLHKSLIRSTHHELKPLRRTIPTLGMCRRGKSFTPSVSMSLTTAVSDDGLQRRIGDYHSNLWDDDFIQSLSTPYGEPSYRERAEKLIGEVKEMFNSMPSEDGESMSPLNDLIERLWMVDSVERLGIDRHFKKEIKSALDYVYSYWNEKGIGCGRDSVFPDVNSTASGFRTLRLHGYSVSSEVLKVFQDQNGQFAFSPSTKERDIRTVLNLYRASFIAFPGEKVMEEAEIFSSRYLKEAVQKIPVSSLSQEIDYTLEYGWHTNMPRLETRNYLDVFGHPTSPWLKKKRTQYLDSEKLLELAKLEFNIFHSLQQKELQYLSRWWIHSGLPELTFGRHRHVEYYTLSSCIATEPKHSAFRLGFAKTCHLITVLDDIYDTFGTMDEIELFNEAVRRWNPSEKERLPEYMKEIYMALYEALTDMAREAEKTQGRDTLNYARKAWEVYLDSYTQEAKWIASGYLPTFEEYLENAKVSSGHRAAALTPLLTLDVPLPDDVLKGIDFPSRFNDLASSFLRLRGDTRCYKADRDRGEEASSISCYMKDNPGLTEEDALNHINAMINDIIKELNWELLKPDSNIPMTARKHAYEITRAFHQLYKYRDGFSVATQETKSLVRRTVLEPVPL</sequence>
<reference key="1">
    <citation type="journal article" date="1999" name="Arch. Biochem. Biophys.">
        <title>cDNA cloning, characterization, and functional expression of four new monoterpene synthase members of the Tpsd gene family from grand fir (Abies grandis).</title>
        <authorList>
            <person name="Bohlmann J."/>
            <person name="Phillips M."/>
            <person name="Ramachandiran V."/>
            <person name="Katoh S."/>
            <person name="Croteau R.B."/>
        </authorList>
    </citation>
    <scope>NUCLEOTIDE SEQUENCE [MRNA]</scope>
    <scope>FUNCTION</scope>
    <scope>CATALYTIC ACTIVITY</scope>
    <source>
        <tissue>Stem</tissue>
    </source>
</reference>
<reference key="2">
    <citation type="journal article" date="1998" name="Proc. Natl. Acad. Sci. U.S.A.">
        <title>Plant terpenoid synthases: molecular biology and phylogenetic analysis.</title>
        <authorList>
            <person name="Bohlmann J."/>
            <person name="Meyer-Gauen G."/>
            <person name="Croteau R.B."/>
        </authorList>
    </citation>
    <scope>GENE FAMILY</scope>
    <scope>NOMENCLATURE</scope>
    <scope>FUNCTION</scope>
</reference>
<reference key="3">
    <citation type="journal article" date="2001" name="Genetics">
        <title>Genomic organization of plant terpene synthases and molecular evolutionary implications.</title>
        <authorList>
            <person name="Trapp S.C."/>
            <person name="Croteau R.B."/>
        </authorList>
    </citation>
    <scope>GENE FAMILY</scope>
    <scope>NOMENCLATURE</scope>
    <scope>FUNCTION</scope>
</reference>
<gene>
    <name type="primary">ag8</name>
    <name type="synonym">agc8</name>
</gene>
<comment type="function">
    <text evidence="3 4 5">Converts geranyl diphosphate to four products with (-)-(4S)-beta-phellandrene (52%) as the major olefin, and lesser amounts of (-)-(1S,5S)-beta-pinene (34%), (-)-1S,5S-alpha-pinene (8.5%), and (-)-(4S)-limonene (6%). Involved in defensive oleoresin formation in conifers in response to insect attack or other injury. Involved in monoterpene (C10) olefins biosynthesis.</text>
</comment>
<comment type="catalytic activity">
    <reaction evidence="3">
        <text>(2E)-geranyl diphosphate = (-)-beta-phellandrene + diphosphate</text>
        <dbReference type="Rhea" id="RHEA:25492"/>
        <dbReference type="ChEBI" id="CHEBI:129"/>
        <dbReference type="ChEBI" id="CHEBI:33019"/>
        <dbReference type="ChEBI" id="CHEBI:58057"/>
        <dbReference type="EC" id="4.2.3.52"/>
    </reaction>
</comment>
<comment type="cofactor">
    <cofactor evidence="1">
        <name>Mg(2+)</name>
        <dbReference type="ChEBI" id="CHEBI:18420"/>
    </cofactor>
    <cofactor evidence="1">
        <name>Mn(2+)</name>
        <dbReference type="ChEBI" id="CHEBI:29035"/>
    </cofactor>
    <text evidence="1">Binds 3 Mg(2+) or Mn(2+) ions per subunit.</text>
</comment>
<comment type="cofactor">
    <cofactor evidence="1">
        <name>K(+)</name>
        <dbReference type="ChEBI" id="CHEBI:29103"/>
    </cofactor>
</comment>
<comment type="pathway">
    <text>Terpene metabolism; oleoresin biosynthesis.</text>
</comment>
<comment type="subcellular location">
    <subcellularLocation>
        <location evidence="1">Plastid</location>
        <location evidence="1">Chloroplast</location>
    </subcellularLocation>
</comment>
<comment type="domain">
    <text>The Asp-Asp-Xaa-Xaa-Asp/Glu (DDXXD/E) motif is important for the catalytic activity, presumably through binding to Mg(2+).</text>
</comment>
<comment type="miscellaneous">
    <text>The conserved 62-Arg-Arg-63 motif may play a role in the isomerization step of the terpenoid cyclization reaction sequence.</text>
</comment>
<comment type="similarity">
    <text evidence="6">Belongs to the terpene synthase family. Tpsd subfamily.</text>
</comment>
<organism>
    <name type="scientific">Abies grandis</name>
    <name type="common">Grand fir</name>
    <name type="synonym">Pinus grandis</name>
    <dbReference type="NCBI Taxonomy" id="46611"/>
    <lineage>
        <taxon>Eukaryota</taxon>
        <taxon>Viridiplantae</taxon>
        <taxon>Streptophyta</taxon>
        <taxon>Embryophyta</taxon>
        <taxon>Tracheophyta</taxon>
        <taxon>Spermatophyta</taxon>
        <taxon>Pinopsida</taxon>
        <taxon>Pinidae</taxon>
        <taxon>Conifers I</taxon>
        <taxon>Pinales</taxon>
        <taxon>Pinaceae</taxon>
        <taxon>Abies</taxon>
    </lineage>
</organism>
<name>TPSD8_ABIGR</name>
<evidence type="ECO:0000250" key="1"/>
<evidence type="ECO:0000255" key="2"/>
<evidence type="ECO:0000269" key="3">
    <source>
    </source>
</evidence>
<evidence type="ECO:0000269" key="4">
    <source>
    </source>
</evidence>
<evidence type="ECO:0000269" key="5">
    <source>
    </source>
</evidence>
<evidence type="ECO:0000305" key="6"/>
<feature type="transit peptide" description="Chloroplast" evidence="2">
    <location>
        <begin position="1"/>
        <end position="48"/>
    </location>
</feature>
<feature type="chain" id="PRO_0000033630" description="Beta-phellandrene synthase, chloroplastic">
    <location>
        <begin position="49"/>
        <end position="630"/>
    </location>
</feature>
<feature type="short sequence motif" description="DDXXD motif">
    <location>
        <begin position="381"/>
        <end position="385"/>
    </location>
</feature>
<feature type="binding site" evidence="1">
    <location>
        <position position="381"/>
    </location>
    <ligand>
        <name>Mg(2+)</name>
        <dbReference type="ChEBI" id="CHEBI:18420"/>
        <label>1</label>
    </ligand>
</feature>
<feature type="binding site" evidence="1">
    <location>
        <position position="381"/>
    </location>
    <ligand>
        <name>Mg(2+)</name>
        <dbReference type="ChEBI" id="CHEBI:18420"/>
        <label>2</label>
    </ligand>
</feature>
<feature type="binding site" evidence="1">
    <location>
        <position position="385"/>
    </location>
    <ligand>
        <name>Mg(2+)</name>
        <dbReference type="ChEBI" id="CHEBI:18420"/>
        <label>1</label>
    </ligand>
</feature>
<feature type="binding site" evidence="1">
    <location>
        <position position="385"/>
    </location>
    <ligand>
        <name>Mg(2+)</name>
        <dbReference type="ChEBI" id="CHEBI:18420"/>
        <label>2</label>
    </ligand>
</feature>
<feature type="binding site" evidence="1">
    <location>
        <position position="533"/>
    </location>
    <ligand>
        <name>Mg(2+)</name>
        <dbReference type="ChEBI" id="CHEBI:18420"/>
        <label>3</label>
    </ligand>
</feature>
<dbReference type="EC" id="4.2.3.52"/>
<dbReference type="EMBL" id="AF139205">
    <property type="protein sequence ID" value="AAF61453.1"/>
    <property type="molecule type" value="mRNA"/>
</dbReference>
<dbReference type="SMR" id="Q9M7D1"/>
<dbReference type="KEGG" id="ag:AAF61453"/>
<dbReference type="BioCyc" id="MetaCyc:AG8-MONOMER"/>
<dbReference type="BRENDA" id="4.2.3.52">
    <property type="organism ID" value="2"/>
</dbReference>
<dbReference type="UniPathway" id="UPA00924"/>
<dbReference type="GO" id="GO:0009507">
    <property type="term" value="C:chloroplast"/>
    <property type="evidence" value="ECO:0007669"/>
    <property type="project" value="UniProtKB-SubCell"/>
</dbReference>
<dbReference type="GO" id="GO:0000287">
    <property type="term" value="F:magnesium ion binding"/>
    <property type="evidence" value="ECO:0007669"/>
    <property type="project" value="InterPro"/>
</dbReference>
<dbReference type="GO" id="GO:0010333">
    <property type="term" value="F:terpene synthase activity"/>
    <property type="evidence" value="ECO:0007669"/>
    <property type="project" value="InterPro"/>
</dbReference>
<dbReference type="GO" id="GO:0016102">
    <property type="term" value="P:diterpenoid biosynthetic process"/>
    <property type="evidence" value="ECO:0007669"/>
    <property type="project" value="InterPro"/>
</dbReference>
<dbReference type="CDD" id="cd00684">
    <property type="entry name" value="Terpene_cyclase_plant_C1"/>
    <property type="match status" value="1"/>
</dbReference>
<dbReference type="FunFam" id="1.50.10.130:FF:000002">
    <property type="entry name" value="Ent-copalyl diphosphate synthase, chloroplastic"/>
    <property type="match status" value="1"/>
</dbReference>
<dbReference type="FunFam" id="1.10.600.10:FF:000005">
    <property type="entry name" value="Ent-kaur-16-ene synthase, chloroplastic"/>
    <property type="match status" value="1"/>
</dbReference>
<dbReference type="Gene3D" id="1.10.600.10">
    <property type="entry name" value="Farnesyl Diphosphate Synthase"/>
    <property type="match status" value="1"/>
</dbReference>
<dbReference type="Gene3D" id="1.50.10.130">
    <property type="entry name" value="Terpene synthase, N-terminal domain"/>
    <property type="match status" value="1"/>
</dbReference>
<dbReference type="InterPro" id="IPR008949">
    <property type="entry name" value="Isoprenoid_synthase_dom_sf"/>
</dbReference>
<dbReference type="InterPro" id="IPR034741">
    <property type="entry name" value="Terpene_cyclase-like_1_C"/>
</dbReference>
<dbReference type="InterPro" id="IPR044814">
    <property type="entry name" value="Terpene_cyclase_plant_C1"/>
</dbReference>
<dbReference type="InterPro" id="IPR001906">
    <property type="entry name" value="Terpene_synth_N"/>
</dbReference>
<dbReference type="InterPro" id="IPR036965">
    <property type="entry name" value="Terpene_synth_N_sf"/>
</dbReference>
<dbReference type="InterPro" id="IPR050148">
    <property type="entry name" value="Terpene_synthase-like"/>
</dbReference>
<dbReference type="InterPro" id="IPR005630">
    <property type="entry name" value="Terpene_synthase_metal-bd"/>
</dbReference>
<dbReference type="InterPro" id="IPR008930">
    <property type="entry name" value="Terpenoid_cyclase/PrenylTrfase"/>
</dbReference>
<dbReference type="PANTHER" id="PTHR31739:SF25">
    <property type="entry name" value="(E,E)-GERANYLLINALOOL SYNTHASE"/>
    <property type="match status" value="1"/>
</dbReference>
<dbReference type="PANTHER" id="PTHR31739">
    <property type="entry name" value="ENT-COPALYL DIPHOSPHATE SYNTHASE, CHLOROPLASTIC"/>
    <property type="match status" value="1"/>
</dbReference>
<dbReference type="Pfam" id="PF01397">
    <property type="entry name" value="Terpene_synth"/>
    <property type="match status" value="1"/>
</dbReference>
<dbReference type="Pfam" id="PF03936">
    <property type="entry name" value="Terpene_synth_C"/>
    <property type="match status" value="1"/>
</dbReference>
<dbReference type="SFLD" id="SFLDS00005">
    <property type="entry name" value="Isoprenoid_Synthase_Type_I"/>
    <property type="match status" value="1"/>
</dbReference>
<dbReference type="SFLD" id="SFLDG01019">
    <property type="entry name" value="Terpene_Cyclase_Like_1_C_Termi"/>
    <property type="match status" value="1"/>
</dbReference>
<dbReference type="SFLD" id="SFLDG01014">
    <property type="entry name" value="Terpene_Cyclase_Like_1_N-term"/>
    <property type="match status" value="1"/>
</dbReference>
<dbReference type="SUPFAM" id="SSF48239">
    <property type="entry name" value="Terpenoid cyclases/Protein prenyltransferases"/>
    <property type="match status" value="1"/>
</dbReference>
<dbReference type="SUPFAM" id="SSF48576">
    <property type="entry name" value="Terpenoid synthases"/>
    <property type="match status" value="1"/>
</dbReference>
<protein>
    <recommendedName>
        <fullName>Beta-phellandrene synthase, chloroplastic</fullName>
        <ecNumber>4.2.3.52</ecNumber>
    </recommendedName>
    <alternativeName>
        <fullName>(-)-(4S)-beta-phellandrene synthase</fullName>
    </alternativeName>
    <alternativeName>
        <fullName>Agg-Bphe</fullName>
    </alternativeName>
</protein>
<proteinExistence type="evidence at protein level"/>
<keyword id="KW-0150">Chloroplast</keyword>
<keyword id="KW-0456">Lyase</keyword>
<keyword id="KW-0460">Magnesium</keyword>
<keyword id="KW-0464">Manganese</keyword>
<keyword id="KW-0479">Metal-binding</keyword>
<keyword id="KW-0934">Plastid</keyword>
<keyword id="KW-0809">Transit peptide</keyword>